<feature type="chain" id="PRO_0000316388" description="Photosystem II protein D1 2" evidence="1">
    <location>
        <begin position="1"/>
        <end position="344"/>
    </location>
</feature>
<feature type="propeptide" id="PRO_0000316389" evidence="1">
    <location>
        <begin position="345"/>
        <end position="359"/>
    </location>
</feature>
<feature type="transmembrane region" description="Helical" evidence="1">
    <location>
        <begin position="29"/>
        <end position="46"/>
    </location>
</feature>
<feature type="transmembrane region" description="Helical" evidence="1">
    <location>
        <begin position="118"/>
        <end position="133"/>
    </location>
</feature>
<feature type="transmembrane region" description="Helical" evidence="1">
    <location>
        <begin position="142"/>
        <end position="156"/>
    </location>
</feature>
<feature type="transmembrane region" description="Helical" evidence="1">
    <location>
        <begin position="197"/>
        <end position="218"/>
    </location>
</feature>
<feature type="transmembrane region" description="Helical" evidence="1">
    <location>
        <begin position="274"/>
        <end position="288"/>
    </location>
</feature>
<feature type="binding site" description="axial binding residue" evidence="1">
    <location>
        <position position="118"/>
    </location>
    <ligand>
        <name>chlorophyll a</name>
        <dbReference type="ChEBI" id="CHEBI:58416"/>
        <label>ChlzD1</label>
    </ligand>
    <ligandPart>
        <name>Mg</name>
        <dbReference type="ChEBI" id="CHEBI:25107"/>
    </ligandPart>
</feature>
<feature type="binding site" evidence="1">
    <location>
        <position position="126"/>
    </location>
    <ligand>
        <name>pheophytin a</name>
        <dbReference type="ChEBI" id="CHEBI:136840"/>
        <label>D1</label>
    </ligand>
</feature>
<feature type="binding site" evidence="1">
    <location>
        <position position="170"/>
    </location>
    <ligand>
        <name>[CaMn4O5] cluster</name>
        <dbReference type="ChEBI" id="CHEBI:189552"/>
    </ligand>
</feature>
<feature type="binding site" evidence="1">
    <location>
        <position position="189"/>
    </location>
    <ligand>
        <name>[CaMn4O5] cluster</name>
        <dbReference type="ChEBI" id="CHEBI:189552"/>
    </ligand>
</feature>
<feature type="binding site" description="axial binding residue" evidence="1">
    <location>
        <position position="198"/>
    </location>
    <ligand>
        <name>chlorophyll a</name>
        <dbReference type="ChEBI" id="CHEBI:58416"/>
        <label>PD1</label>
    </ligand>
    <ligandPart>
        <name>Mg</name>
        <dbReference type="ChEBI" id="CHEBI:25107"/>
    </ligandPart>
</feature>
<feature type="binding site" evidence="1">
    <location>
        <position position="215"/>
    </location>
    <ligand>
        <name>a quinone</name>
        <dbReference type="ChEBI" id="CHEBI:132124"/>
        <label>B</label>
    </ligand>
</feature>
<feature type="binding site" evidence="1">
    <location>
        <position position="215"/>
    </location>
    <ligand>
        <name>Fe cation</name>
        <dbReference type="ChEBI" id="CHEBI:24875"/>
        <note>ligand shared with heterodimeric partner</note>
    </ligand>
</feature>
<feature type="binding site" evidence="1">
    <location>
        <begin position="264"/>
        <end position="265"/>
    </location>
    <ligand>
        <name>a quinone</name>
        <dbReference type="ChEBI" id="CHEBI:132124"/>
        <label>B</label>
    </ligand>
</feature>
<feature type="binding site" evidence="1">
    <location>
        <position position="272"/>
    </location>
    <ligand>
        <name>Fe cation</name>
        <dbReference type="ChEBI" id="CHEBI:24875"/>
        <note>ligand shared with heterodimeric partner</note>
    </ligand>
</feature>
<feature type="binding site" evidence="1">
    <location>
        <position position="332"/>
    </location>
    <ligand>
        <name>[CaMn4O5] cluster</name>
        <dbReference type="ChEBI" id="CHEBI:189552"/>
    </ligand>
</feature>
<feature type="binding site" evidence="1">
    <location>
        <position position="333"/>
    </location>
    <ligand>
        <name>[CaMn4O5] cluster</name>
        <dbReference type="ChEBI" id="CHEBI:189552"/>
    </ligand>
</feature>
<feature type="binding site" evidence="1">
    <location>
        <position position="342"/>
    </location>
    <ligand>
        <name>[CaMn4O5] cluster</name>
        <dbReference type="ChEBI" id="CHEBI:189552"/>
    </ligand>
</feature>
<feature type="binding site" evidence="1">
    <location>
        <position position="344"/>
    </location>
    <ligand>
        <name>[CaMn4O5] cluster</name>
        <dbReference type="ChEBI" id="CHEBI:189552"/>
    </ligand>
</feature>
<feature type="site" description="Tyrosine radical intermediate" evidence="1">
    <location>
        <position position="161"/>
    </location>
</feature>
<feature type="site" description="Stabilizes free radical intermediate" evidence="1">
    <location>
        <position position="190"/>
    </location>
</feature>
<feature type="site" description="Cleavage; by CtpA" evidence="1">
    <location>
        <begin position="344"/>
        <end position="345"/>
    </location>
</feature>
<gene>
    <name evidence="1 2" type="primary">psbA2</name>
    <name type="ordered locus">sync_1856</name>
</gene>
<sequence>MTTTIQQRSGANGWQQFCDWVTSTNNRLYVGWFGVLMIPTLLAATTCFIVAFIAAPPVDIDGIREPVAGSLMYGNNIISGAVVPSSNAIGLHFYPIWEAASLDEWLYNGGPFQLVVFHFLIGIYAYMGREWELSYRLGMRPWICVAYSAPVAAASAVFLVYPFGQGSFSDAMPLGISGTFNYMLVFQAEHNILMHPFHMLGVAGVFGGSLFSAMHGSLVTSSLVRETTETESQNYGYKFGQEEETYNIVAAHGYFGRLIFQYASFNNSRSLHFFLAAWPVVGIWFTALGVSTMAFNLNGFNFNQSILDGQGRVLNTWADVLNRAGLGMEVMHERNAHNFPLDLAAAESTPVALQAPAIG</sequence>
<evidence type="ECO:0000255" key="1">
    <source>
        <dbReference type="HAMAP-Rule" id="MF_01379"/>
    </source>
</evidence>
<evidence type="ECO:0000305" key="2"/>
<keyword id="KW-0106">Calcium</keyword>
<keyword id="KW-0148">Chlorophyll</keyword>
<keyword id="KW-0157">Chromophore</keyword>
<keyword id="KW-0249">Electron transport</keyword>
<keyword id="KW-0359">Herbicide resistance</keyword>
<keyword id="KW-0408">Iron</keyword>
<keyword id="KW-0460">Magnesium</keyword>
<keyword id="KW-0464">Manganese</keyword>
<keyword id="KW-0472">Membrane</keyword>
<keyword id="KW-0479">Metal-binding</keyword>
<keyword id="KW-0560">Oxidoreductase</keyword>
<keyword id="KW-0602">Photosynthesis</keyword>
<keyword id="KW-0604">Photosystem II</keyword>
<keyword id="KW-1185">Reference proteome</keyword>
<keyword id="KW-0793">Thylakoid</keyword>
<keyword id="KW-0812">Transmembrane</keyword>
<keyword id="KW-1133">Transmembrane helix</keyword>
<keyword id="KW-0813">Transport</keyword>
<reference key="1">
    <citation type="journal article" date="2006" name="Proc. Natl. Acad. Sci. U.S.A.">
        <title>Genome sequence of Synechococcus CC9311: insights into adaptation to a coastal environment.</title>
        <authorList>
            <person name="Palenik B."/>
            <person name="Ren Q."/>
            <person name="Dupont C.L."/>
            <person name="Myers G.S."/>
            <person name="Heidelberg J.F."/>
            <person name="Badger J.H."/>
            <person name="Madupu R."/>
            <person name="Nelson W.C."/>
            <person name="Brinkac L.M."/>
            <person name="Dodson R.J."/>
            <person name="Durkin A.S."/>
            <person name="Daugherty S.C."/>
            <person name="Sullivan S.A."/>
            <person name="Khouri H."/>
            <person name="Mohamoud Y."/>
            <person name="Halpin R."/>
            <person name="Paulsen I.T."/>
        </authorList>
    </citation>
    <scope>NUCLEOTIDE SEQUENCE [LARGE SCALE GENOMIC DNA]</scope>
    <source>
        <strain>CC9311</strain>
    </source>
</reference>
<dbReference type="EC" id="1.10.3.9" evidence="1"/>
<dbReference type="EMBL" id="CP000435">
    <property type="protein sequence ID" value="ABI47082.1"/>
    <property type="status" value="ALT_INIT"/>
    <property type="molecule type" value="Genomic_DNA"/>
</dbReference>
<dbReference type="RefSeq" id="WP_011618340.1">
    <property type="nucleotide sequence ID" value="NC_008319.1"/>
</dbReference>
<dbReference type="SMR" id="Q0I912"/>
<dbReference type="KEGG" id="syg:sync_1856"/>
<dbReference type="HOGENOM" id="CLU_054206_1_0_3"/>
<dbReference type="OrthoDB" id="505356at2"/>
<dbReference type="Proteomes" id="UP000001961">
    <property type="component" value="Chromosome"/>
</dbReference>
<dbReference type="GO" id="GO:0009523">
    <property type="term" value="C:photosystem II"/>
    <property type="evidence" value="ECO:0007669"/>
    <property type="project" value="UniProtKB-KW"/>
</dbReference>
<dbReference type="GO" id="GO:0031676">
    <property type="term" value="C:plasma membrane-derived thylakoid membrane"/>
    <property type="evidence" value="ECO:0007669"/>
    <property type="project" value="UniProtKB-SubCell"/>
</dbReference>
<dbReference type="GO" id="GO:0016168">
    <property type="term" value="F:chlorophyll binding"/>
    <property type="evidence" value="ECO:0007669"/>
    <property type="project" value="UniProtKB-UniRule"/>
</dbReference>
<dbReference type="GO" id="GO:0045156">
    <property type="term" value="F:electron transporter, transferring electrons within the cyclic electron transport pathway of photosynthesis activity"/>
    <property type="evidence" value="ECO:0007669"/>
    <property type="project" value="InterPro"/>
</dbReference>
<dbReference type="GO" id="GO:0005506">
    <property type="term" value="F:iron ion binding"/>
    <property type="evidence" value="ECO:0007669"/>
    <property type="project" value="UniProtKB-UniRule"/>
</dbReference>
<dbReference type="GO" id="GO:0016682">
    <property type="term" value="F:oxidoreductase activity, acting on diphenols and related substances as donors, oxygen as acceptor"/>
    <property type="evidence" value="ECO:0007669"/>
    <property type="project" value="UniProtKB-UniRule"/>
</dbReference>
<dbReference type="GO" id="GO:0010242">
    <property type="term" value="F:oxygen evolving activity"/>
    <property type="evidence" value="ECO:0007669"/>
    <property type="project" value="UniProtKB-EC"/>
</dbReference>
<dbReference type="GO" id="GO:0009772">
    <property type="term" value="P:photosynthetic electron transport in photosystem II"/>
    <property type="evidence" value="ECO:0007669"/>
    <property type="project" value="InterPro"/>
</dbReference>
<dbReference type="GO" id="GO:0009635">
    <property type="term" value="P:response to herbicide"/>
    <property type="evidence" value="ECO:0007669"/>
    <property type="project" value="UniProtKB-KW"/>
</dbReference>
<dbReference type="FunFam" id="1.20.85.10:FF:000002">
    <property type="entry name" value="Photosystem II protein D1"/>
    <property type="match status" value="1"/>
</dbReference>
<dbReference type="Gene3D" id="1.20.85.10">
    <property type="entry name" value="Photosystem II protein D1-like"/>
    <property type="match status" value="1"/>
</dbReference>
<dbReference type="HAMAP" id="MF_01379">
    <property type="entry name" value="PSII_PsbA_D1"/>
    <property type="match status" value="1"/>
</dbReference>
<dbReference type="InterPro" id="IPR055266">
    <property type="entry name" value="D1/D2"/>
</dbReference>
<dbReference type="InterPro" id="IPR036854">
    <property type="entry name" value="Photo_II_D1/D2_sf"/>
</dbReference>
<dbReference type="InterPro" id="IPR000484">
    <property type="entry name" value="Photo_RC_L/M"/>
</dbReference>
<dbReference type="InterPro" id="IPR055265">
    <property type="entry name" value="Photo_RC_L/M_CS"/>
</dbReference>
<dbReference type="InterPro" id="IPR005867">
    <property type="entry name" value="PSII_D1"/>
</dbReference>
<dbReference type="NCBIfam" id="TIGR01151">
    <property type="entry name" value="psbA"/>
    <property type="match status" value="1"/>
</dbReference>
<dbReference type="PANTHER" id="PTHR33149:SF12">
    <property type="entry name" value="PHOTOSYSTEM II D2 PROTEIN"/>
    <property type="match status" value="1"/>
</dbReference>
<dbReference type="PANTHER" id="PTHR33149">
    <property type="entry name" value="PHOTOSYSTEM II PROTEIN D1"/>
    <property type="match status" value="1"/>
</dbReference>
<dbReference type="Pfam" id="PF00124">
    <property type="entry name" value="Photo_RC"/>
    <property type="match status" value="1"/>
</dbReference>
<dbReference type="PRINTS" id="PR00256">
    <property type="entry name" value="REACTNCENTRE"/>
</dbReference>
<dbReference type="SUPFAM" id="SSF81483">
    <property type="entry name" value="Bacterial photosystem II reaction centre, L and M subunits"/>
    <property type="match status" value="1"/>
</dbReference>
<dbReference type="PROSITE" id="PS00244">
    <property type="entry name" value="REACTION_CENTER"/>
    <property type="match status" value="1"/>
</dbReference>
<protein>
    <recommendedName>
        <fullName evidence="1">Photosystem II protein D1 2</fullName>
        <shortName evidence="1">PSII D1 protein 2</shortName>
        <ecNumber evidence="1">1.10.3.9</ecNumber>
    </recommendedName>
    <alternativeName>
        <fullName evidence="1">Photosystem II Q(B) protein 2</fullName>
    </alternativeName>
</protein>
<comment type="function">
    <text evidence="1">Photosystem II (PSII) is a light-driven water:plastoquinone oxidoreductase that uses light energy to abstract electrons from H(2)O, generating O(2) and a proton gradient subsequently used for ATP formation. It consists of a core antenna complex that captures photons, and an electron transfer chain that converts photonic excitation into a charge separation. The D1/D2 (PsbA/PsbD) reaction center heterodimer binds P680, the primary electron donor of PSII as well as several subsequent electron acceptors.</text>
</comment>
<comment type="catalytic activity">
    <reaction evidence="1">
        <text>2 a plastoquinone + 4 hnu + 2 H2O = 2 a plastoquinol + O2</text>
        <dbReference type="Rhea" id="RHEA:36359"/>
        <dbReference type="Rhea" id="RHEA-COMP:9561"/>
        <dbReference type="Rhea" id="RHEA-COMP:9562"/>
        <dbReference type="ChEBI" id="CHEBI:15377"/>
        <dbReference type="ChEBI" id="CHEBI:15379"/>
        <dbReference type="ChEBI" id="CHEBI:17757"/>
        <dbReference type="ChEBI" id="CHEBI:30212"/>
        <dbReference type="ChEBI" id="CHEBI:62192"/>
        <dbReference type="EC" id="1.10.3.9"/>
    </reaction>
</comment>
<comment type="cofactor">
    <text evidence="1">The D1/D2 heterodimer binds P680, chlorophylls that are the primary electron donor of PSII, and subsequent electron acceptors. It shares a non-heme iron and each subunit binds pheophytin, quinone, additional chlorophylls, carotenoids and lipids. D1 provides most of the ligands for the Mn4-Ca-O5 cluster of the oxygen-evolving complex (OEC). There is also a Cl(-1) ion associated with D1 and D2, which is required for oxygen evolution. The PSII complex binds additional chlorophylls, carotenoids and specific lipids.</text>
</comment>
<comment type="subunit">
    <text evidence="1">PSII is composed of 1 copy each of membrane proteins PsbA, PsbB, PsbC, PsbD, PsbE, PsbF, PsbH, PsbI, PsbJ, PsbK, PsbL, PsbM, PsbT, PsbX, PsbY, PsbZ, Psb30/Ycf12, peripheral proteins PsbO, CyanoQ (PsbQ), PsbU, PsbV and a large number of cofactors. It forms dimeric complexes.</text>
</comment>
<comment type="subcellular location">
    <subcellularLocation>
        <location evidence="1">Cellular thylakoid membrane</location>
        <topology evidence="1">Multi-pass membrane protein</topology>
    </subcellularLocation>
</comment>
<comment type="PTM">
    <text evidence="1">Tyr-161 forms a radical intermediate that is referred to as redox-active TyrZ, YZ or Y-Z.</text>
</comment>
<comment type="PTM">
    <text evidence="1">C-terminally processed by CtpA; processing is essential to allow assembly of the oxygen-evolving complex and thus photosynthetic growth.</text>
</comment>
<comment type="miscellaneous">
    <text evidence="1">Cyanobacteria usually contain more than 2 copies of the psbA gene.</text>
</comment>
<comment type="miscellaneous">
    <text evidence="1">2 of the reaction center chlorophylls (ChlD1 and ChlD2) are entirely coordinated by water.</text>
</comment>
<comment type="miscellaneous">
    <text evidence="1">Herbicides such as atrazine, BNT, diuron or ioxynil bind in the Q(B) binding site and block subsequent electron transfer.</text>
</comment>
<comment type="similarity">
    <text evidence="1">Belongs to the reaction center PufL/M/PsbA/D family.</text>
</comment>
<comment type="sequence caution" evidence="2">
    <conflict type="erroneous initiation">
        <sequence resource="EMBL-CDS" id="ABI47082"/>
    </conflict>
    <text>Extended N-terminus.</text>
</comment>
<organism>
    <name type="scientific">Synechococcus sp. (strain CC9311)</name>
    <dbReference type="NCBI Taxonomy" id="64471"/>
    <lineage>
        <taxon>Bacteria</taxon>
        <taxon>Bacillati</taxon>
        <taxon>Cyanobacteriota</taxon>
        <taxon>Cyanophyceae</taxon>
        <taxon>Synechococcales</taxon>
        <taxon>Synechococcaceae</taxon>
        <taxon>Synechococcus</taxon>
    </lineage>
</organism>
<proteinExistence type="inferred from homology"/>
<name>PSBA2_SYNS3</name>
<accession>Q0I912</accession>